<feature type="initiator methionine" description="Removed" evidence="1">
    <location>
        <position position="1"/>
    </location>
</feature>
<feature type="chain" id="PRO_0000075371" description="FKBP-type 16 kDa peptidyl-prolyl cis-trans isomerase">
    <location>
        <begin position="2"/>
        <end position="149"/>
    </location>
</feature>
<feature type="domain" description="PPIase FKBP-type" evidence="2">
    <location>
        <begin position="2"/>
        <end position="72"/>
    </location>
</feature>
<protein>
    <recommendedName>
        <fullName>FKBP-type 16 kDa peptidyl-prolyl cis-trans isomerase</fullName>
        <shortName>PPIase</shortName>
        <ecNumber>5.2.1.8</ecNumber>
    </recommendedName>
    <alternativeName>
        <fullName>Rotamase</fullName>
    </alternativeName>
</protein>
<sequence length="149" mass="16081">MSESVQSNSAVLVHFTLKLDDGTTAESTRNNGKPALFRLGDASLSEGLEQHLLGLKVGDKTTFSLEPDAAFGVPSPDLIQYFSRREFMDAGEPEIGAIMLFTAMDGSEMPGVIREINGDSITVDFNHPLAGQTVHFDIEVLEIDPALEA</sequence>
<proteinExistence type="inferred from homology"/>
<accession>P0AEM1</accession>
<accession>P22563</accession>
<gene>
    <name type="primary">fkpB</name>
    <name type="synonym">slpA</name>
    <name type="ordered locus">c0032</name>
</gene>
<organism>
    <name type="scientific">Escherichia coli O6:H1 (strain CFT073 / ATCC 700928 / UPEC)</name>
    <dbReference type="NCBI Taxonomy" id="199310"/>
    <lineage>
        <taxon>Bacteria</taxon>
        <taxon>Pseudomonadati</taxon>
        <taxon>Pseudomonadota</taxon>
        <taxon>Gammaproteobacteria</taxon>
        <taxon>Enterobacterales</taxon>
        <taxon>Enterobacteriaceae</taxon>
        <taxon>Escherichia</taxon>
    </lineage>
</organism>
<name>FKBX_ECOL6</name>
<keyword id="KW-0413">Isomerase</keyword>
<keyword id="KW-1185">Reference proteome</keyword>
<keyword id="KW-0697">Rotamase</keyword>
<reference key="1">
    <citation type="journal article" date="2002" name="Proc. Natl. Acad. Sci. U.S.A.">
        <title>Extensive mosaic structure revealed by the complete genome sequence of uropathogenic Escherichia coli.</title>
        <authorList>
            <person name="Welch R.A."/>
            <person name="Burland V."/>
            <person name="Plunkett G. III"/>
            <person name="Redford P."/>
            <person name="Roesch P."/>
            <person name="Rasko D."/>
            <person name="Buckles E.L."/>
            <person name="Liou S.-R."/>
            <person name="Boutin A."/>
            <person name="Hackett J."/>
            <person name="Stroud D."/>
            <person name="Mayhew G.F."/>
            <person name="Rose D.J."/>
            <person name="Zhou S."/>
            <person name="Schwartz D.C."/>
            <person name="Perna N.T."/>
            <person name="Mobley H.L.T."/>
            <person name="Donnenberg M.S."/>
            <person name="Blattner F.R."/>
        </authorList>
    </citation>
    <scope>NUCLEOTIDE SEQUENCE [LARGE SCALE GENOMIC DNA]</scope>
    <source>
        <strain>CFT073 / ATCC 700928 / UPEC</strain>
    </source>
</reference>
<dbReference type="EC" id="5.2.1.8"/>
<dbReference type="EMBL" id="AE014075">
    <property type="protein sequence ID" value="AAN78532.1"/>
    <property type="molecule type" value="Genomic_DNA"/>
</dbReference>
<dbReference type="RefSeq" id="WP_000004655.1">
    <property type="nucleotide sequence ID" value="NZ_CP051263.1"/>
</dbReference>
<dbReference type="BMRB" id="P0AEM1"/>
<dbReference type="SMR" id="P0AEM1"/>
<dbReference type="STRING" id="199310.c0032"/>
<dbReference type="GeneID" id="93777408"/>
<dbReference type="KEGG" id="ecc:c0032"/>
<dbReference type="eggNOG" id="COG1047">
    <property type="taxonomic scope" value="Bacteria"/>
</dbReference>
<dbReference type="HOGENOM" id="CLU_098197_3_0_6"/>
<dbReference type="BioCyc" id="ECOL199310:C0032-MONOMER"/>
<dbReference type="Proteomes" id="UP000001410">
    <property type="component" value="Chromosome"/>
</dbReference>
<dbReference type="GO" id="GO:0003755">
    <property type="term" value="F:peptidyl-prolyl cis-trans isomerase activity"/>
    <property type="evidence" value="ECO:0007669"/>
    <property type="project" value="UniProtKB-KW"/>
</dbReference>
<dbReference type="GO" id="GO:0006457">
    <property type="term" value="P:protein folding"/>
    <property type="evidence" value="ECO:0007669"/>
    <property type="project" value="UniProtKB-ARBA"/>
</dbReference>
<dbReference type="FunFam" id="2.40.10.330:FF:000002">
    <property type="entry name" value="Peptidyl-prolyl cis-trans isomerase"/>
    <property type="match status" value="1"/>
</dbReference>
<dbReference type="Gene3D" id="2.40.10.330">
    <property type="match status" value="1"/>
</dbReference>
<dbReference type="Gene3D" id="3.10.50.40">
    <property type="match status" value="1"/>
</dbReference>
<dbReference type="InterPro" id="IPR046357">
    <property type="entry name" value="PPIase_dom_sf"/>
</dbReference>
<dbReference type="InterPro" id="IPR001179">
    <property type="entry name" value="PPIase_FKBP_dom"/>
</dbReference>
<dbReference type="InterPro" id="IPR048261">
    <property type="entry name" value="SlpA/SlyD-like_ins_sf"/>
</dbReference>
<dbReference type="NCBIfam" id="NF011676">
    <property type="entry name" value="PRK15095.1"/>
    <property type="match status" value="1"/>
</dbReference>
<dbReference type="PANTHER" id="PTHR47861:SF4">
    <property type="entry name" value="FKBP-TYPE 16 KDA PEPTIDYL-PROLYL CIS-TRANS ISOMERASE"/>
    <property type="match status" value="1"/>
</dbReference>
<dbReference type="PANTHER" id="PTHR47861">
    <property type="entry name" value="FKBP-TYPE PEPTIDYL-PROLYL CIS-TRANS ISOMERASE SLYD"/>
    <property type="match status" value="1"/>
</dbReference>
<dbReference type="Pfam" id="PF00254">
    <property type="entry name" value="FKBP_C"/>
    <property type="match status" value="1"/>
</dbReference>
<dbReference type="SUPFAM" id="SSF54534">
    <property type="entry name" value="FKBP-like"/>
    <property type="match status" value="1"/>
</dbReference>
<dbReference type="PROSITE" id="PS50059">
    <property type="entry name" value="FKBP_PPIASE"/>
    <property type="match status" value="1"/>
</dbReference>
<comment type="function">
    <text evidence="1">PPIases accelerate the folding of proteins. Substrate specificity carried out with 'Suc-Ala-Xaa-Pro-Phe-4-nitroanilide', where Xaa is the amino acid tested, was found to be Phe &gt; Leu &gt;&gt; Ile &gt; Lys = Ala &gt; Trp &gt; His &gt;&gt; Gln (By similarity).</text>
</comment>
<comment type="catalytic activity">
    <reaction>
        <text>[protein]-peptidylproline (omega=180) = [protein]-peptidylproline (omega=0)</text>
        <dbReference type="Rhea" id="RHEA:16237"/>
        <dbReference type="Rhea" id="RHEA-COMP:10747"/>
        <dbReference type="Rhea" id="RHEA-COMP:10748"/>
        <dbReference type="ChEBI" id="CHEBI:83833"/>
        <dbReference type="ChEBI" id="CHEBI:83834"/>
        <dbReference type="EC" id="5.2.1.8"/>
    </reaction>
</comment>
<comment type="similarity">
    <text evidence="3">Belongs to the FKBP-type PPIase family.</text>
</comment>
<evidence type="ECO:0000250" key="1"/>
<evidence type="ECO:0000255" key="2">
    <source>
        <dbReference type="PROSITE-ProRule" id="PRU00277"/>
    </source>
</evidence>
<evidence type="ECO:0000305" key="3"/>